<feature type="chain" id="PRO_0000092245" description="Glutathione/L-cysteine transport system ATP-binding/permease protein CydD">
    <location>
        <begin position="1"/>
        <end position="586"/>
    </location>
</feature>
<feature type="transmembrane region" description="Helical" evidence="2">
    <location>
        <begin position="28"/>
        <end position="48"/>
    </location>
</feature>
<feature type="transmembrane region" description="Helical" evidence="2">
    <location>
        <begin position="62"/>
        <end position="82"/>
    </location>
</feature>
<feature type="transmembrane region" description="Helical" evidence="2">
    <location>
        <begin position="146"/>
        <end position="166"/>
    </location>
</feature>
<feature type="transmembrane region" description="Helical" evidence="2">
    <location>
        <begin position="167"/>
        <end position="187"/>
    </location>
</feature>
<feature type="transmembrane region" description="Helical" evidence="2">
    <location>
        <begin position="250"/>
        <end position="270"/>
    </location>
</feature>
<feature type="transmembrane region" description="Helical" evidence="2">
    <location>
        <begin position="278"/>
        <end position="298"/>
    </location>
</feature>
<feature type="domain" description="ABC transmembrane type-1" evidence="4">
    <location>
        <begin position="28"/>
        <end position="316"/>
    </location>
</feature>
<feature type="domain" description="ABC transporter" evidence="3">
    <location>
        <begin position="350"/>
        <end position="581"/>
    </location>
</feature>
<feature type="binding site" evidence="3">
    <location>
        <begin position="383"/>
        <end position="390"/>
    </location>
    <ligand>
        <name>ATP</name>
        <dbReference type="ChEBI" id="CHEBI:30616"/>
    </ligand>
</feature>
<sequence>MNKLRQKYLQKWLRAQQEPIKKLMRANIVLATLSSFILVAQTYFLATLLDKLIMQNVPRDELIPYFLGLIIGFGMRAIILWAREKIGFQSGQLLRNHIRQKILDKIHLVGPATINQKPAGSWASIMLEQVENLHNFYARFLPQQSLSAIVPVVIFIAVFPLNWAAGLILMITAPLVPLFMIIVGIAAADNSQKNMDTLSRLSAQFLDRLRGLETLRLFNRTSEQTEHIENATEDFRETTMDVLKLAFLSSAVLEFFTSISIALMAVYFGFSYLGQIEFGTYNAPLTLFTGFFCLILAPEFYQPLRDLGTYYHDRAAGIGAADAIVDFLESDYLTVHQNEKTISLESAVEISAENLVVLSTQGSALTKPLNFQIPANHNVALVGQSGAGKTSLMNVILGFLPYEGSLKINGQELRESNLADWRKHIAWVGQNPLLLQGTIKENLLLGDVQANDEEINQALMRSQAKEFTDKLGLHHEIKDGGLGISVGQAQRLAIARALLRKGDLLLLDEPTASLDAQSENLVLQALNEASQHQTTLMITHRIEDLKQCDQIFVMQRGEIVQQGKFTELQHEGFFAELLAQRQQDIQ</sequence>
<organism>
    <name type="scientific">Haemophilus influenzae (strain ATCC 51907 / DSM 11121 / KW20 / Rd)</name>
    <dbReference type="NCBI Taxonomy" id="71421"/>
    <lineage>
        <taxon>Bacteria</taxon>
        <taxon>Pseudomonadati</taxon>
        <taxon>Pseudomonadota</taxon>
        <taxon>Gammaproteobacteria</taxon>
        <taxon>Pasteurellales</taxon>
        <taxon>Pasteurellaceae</taxon>
        <taxon>Haemophilus</taxon>
    </lineage>
</organism>
<protein>
    <recommendedName>
        <fullName evidence="1">Glutathione/L-cysteine transport system ATP-binding/permease protein CydD</fullName>
        <ecNumber evidence="1">7.4.2.-</ecNumber>
    </recommendedName>
</protein>
<reference key="1">
    <citation type="journal article" date="1995" name="Science">
        <title>Whole-genome random sequencing and assembly of Haemophilus influenzae Rd.</title>
        <authorList>
            <person name="Fleischmann R.D."/>
            <person name="Adams M.D."/>
            <person name="White O."/>
            <person name="Clayton R.A."/>
            <person name="Kirkness E.F."/>
            <person name="Kerlavage A.R."/>
            <person name="Bult C.J."/>
            <person name="Tomb J.-F."/>
            <person name="Dougherty B.A."/>
            <person name="Merrick J.M."/>
            <person name="McKenney K."/>
            <person name="Sutton G.G."/>
            <person name="FitzHugh W."/>
            <person name="Fields C.A."/>
            <person name="Gocayne J.D."/>
            <person name="Scott J.D."/>
            <person name="Shirley R."/>
            <person name="Liu L.-I."/>
            <person name="Glodek A."/>
            <person name="Kelley J.M."/>
            <person name="Weidman J.F."/>
            <person name="Phillips C.A."/>
            <person name="Spriggs T."/>
            <person name="Hedblom E."/>
            <person name="Cotton M.D."/>
            <person name="Utterback T.R."/>
            <person name="Hanna M.C."/>
            <person name="Nguyen D.T."/>
            <person name="Saudek D.M."/>
            <person name="Brandon R.C."/>
            <person name="Fine L.D."/>
            <person name="Fritchman J.L."/>
            <person name="Fuhrmann J.L."/>
            <person name="Geoghagen N.S.M."/>
            <person name="Gnehm C.L."/>
            <person name="McDonald L.A."/>
            <person name="Small K.V."/>
            <person name="Fraser C.M."/>
            <person name="Smith H.O."/>
            <person name="Venter J.C."/>
        </authorList>
    </citation>
    <scope>NUCLEOTIDE SEQUENCE [LARGE SCALE GENOMIC DNA]</scope>
    <source>
        <strain>ATCC 51907 / DSM 11121 / KW20 / Rd</strain>
    </source>
</reference>
<gene>
    <name type="primary">cydD</name>
    <name type="ordered locus">HI_1157</name>
</gene>
<keyword id="KW-0029">Amino-acid transport</keyword>
<keyword id="KW-0067">ATP-binding</keyword>
<keyword id="KW-0997">Cell inner membrane</keyword>
<keyword id="KW-1003">Cell membrane</keyword>
<keyword id="KW-0472">Membrane</keyword>
<keyword id="KW-0547">Nucleotide-binding</keyword>
<keyword id="KW-1185">Reference proteome</keyword>
<keyword id="KW-1278">Translocase</keyword>
<keyword id="KW-0812">Transmembrane</keyword>
<keyword id="KW-1133">Transmembrane helix</keyword>
<keyword id="KW-0813">Transport</keyword>
<evidence type="ECO:0000250" key="1">
    <source>
        <dbReference type="UniProtKB" id="P29018"/>
    </source>
</evidence>
<evidence type="ECO:0000255" key="2"/>
<evidence type="ECO:0000255" key="3">
    <source>
        <dbReference type="PROSITE-ProRule" id="PRU00434"/>
    </source>
</evidence>
<evidence type="ECO:0000255" key="4">
    <source>
        <dbReference type="PROSITE-ProRule" id="PRU00441"/>
    </source>
</evidence>
<evidence type="ECO:0000305" key="5"/>
<dbReference type="EC" id="7.4.2.-" evidence="1"/>
<dbReference type="EMBL" id="L42023">
    <property type="protein sequence ID" value="AAC22812.1"/>
    <property type="molecule type" value="Genomic_DNA"/>
</dbReference>
<dbReference type="PIR" id="F64186">
    <property type="entry name" value="F64186"/>
</dbReference>
<dbReference type="RefSeq" id="NP_439315.1">
    <property type="nucleotide sequence ID" value="NC_000907.1"/>
</dbReference>
<dbReference type="SMR" id="P45082"/>
<dbReference type="STRING" id="71421.HI_1157"/>
<dbReference type="EnsemblBacteria" id="AAC22812">
    <property type="protein sequence ID" value="AAC22812"/>
    <property type="gene ID" value="HI_1157"/>
</dbReference>
<dbReference type="KEGG" id="hin:HI_1157"/>
<dbReference type="PATRIC" id="fig|71421.8.peg.1208"/>
<dbReference type="eggNOG" id="COG4988">
    <property type="taxonomic scope" value="Bacteria"/>
</dbReference>
<dbReference type="HOGENOM" id="CLU_000604_84_9_6"/>
<dbReference type="OrthoDB" id="9806127at2"/>
<dbReference type="PhylomeDB" id="P45082"/>
<dbReference type="BioCyc" id="HINF71421:G1GJ1-1191-MONOMER"/>
<dbReference type="Proteomes" id="UP000000579">
    <property type="component" value="Chromosome"/>
</dbReference>
<dbReference type="GO" id="GO:0005886">
    <property type="term" value="C:plasma membrane"/>
    <property type="evidence" value="ECO:0007669"/>
    <property type="project" value="UniProtKB-SubCell"/>
</dbReference>
<dbReference type="GO" id="GO:0140359">
    <property type="term" value="F:ABC-type transporter activity"/>
    <property type="evidence" value="ECO:0007669"/>
    <property type="project" value="InterPro"/>
</dbReference>
<dbReference type="GO" id="GO:0005524">
    <property type="term" value="F:ATP binding"/>
    <property type="evidence" value="ECO:0007669"/>
    <property type="project" value="UniProtKB-KW"/>
</dbReference>
<dbReference type="GO" id="GO:0016887">
    <property type="term" value="F:ATP hydrolysis activity"/>
    <property type="evidence" value="ECO:0007669"/>
    <property type="project" value="InterPro"/>
</dbReference>
<dbReference type="GO" id="GO:0034040">
    <property type="term" value="F:ATPase-coupled lipid transmembrane transporter activity"/>
    <property type="evidence" value="ECO:0000318"/>
    <property type="project" value="GO_Central"/>
</dbReference>
<dbReference type="GO" id="GO:0042883">
    <property type="term" value="P:cysteine transport"/>
    <property type="evidence" value="ECO:0007669"/>
    <property type="project" value="InterPro"/>
</dbReference>
<dbReference type="GO" id="GO:0055085">
    <property type="term" value="P:transmembrane transport"/>
    <property type="evidence" value="ECO:0000318"/>
    <property type="project" value="GO_Central"/>
</dbReference>
<dbReference type="CDD" id="cd18584">
    <property type="entry name" value="ABC_6TM_AarD_CydD"/>
    <property type="match status" value="1"/>
</dbReference>
<dbReference type="FunFam" id="1.20.1560.10:FF:000039">
    <property type="entry name" value="Cysteine/glutathione ABC transporter permease/ATP-binding protein CydD"/>
    <property type="match status" value="1"/>
</dbReference>
<dbReference type="Gene3D" id="1.20.1560.10">
    <property type="entry name" value="ABC transporter type 1, transmembrane domain"/>
    <property type="match status" value="1"/>
</dbReference>
<dbReference type="Gene3D" id="3.40.50.300">
    <property type="entry name" value="P-loop containing nucleotide triphosphate hydrolases"/>
    <property type="match status" value="1"/>
</dbReference>
<dbReference type="InterPro" id="IPR003593">
    <property type="entry name" value="AAA+_ATPase"/>
</dbReference>
<dbReference type="InterPro" id="IPR011527">
    <property type="entry name" value="ABC1_TM_dom"/>
</dbReference>
<dbReference type="InterPro" id="IPR036640">
    <property type="entry name" value="ABC1_TM_sf"/>
</dbReference>
<dbReference type="InterPro" id="IPR003439">
    <property type="entry name" value="ABC_transporter-like_ATP-bd"/>
</dbReference>
<dbReference type="InterPro" id="IPR017871">
    <property type="entry name" value="ABC_transporter-like_CS"/>
</dbReference>
<dbReference type="InterPro" id="IPR014216">
    <property type="entry name" value="ABC_transptr_CydD"/>
</dbReference>
<dbReference type="InterPro" id="IPR027417">
    <property type="entry name" value="P-loop_NTPase"/>
</dbReference>
<dbReference type="InterPro" id="IPR039421">
    <property type="entry name" value="Type_1_exporter"/>
</dbReference>
<dbReference type="NCBIfam" id="TIGR02857">
    <property type="entry name" value="CydD"/>
    <property type="match status" value="1"/>
</dbReference>
<dbReference type="NCBIfam" id="NF008379">
    <property type="entry name" value="PRK11174.1"/>
    <property type="match status" value="1"/>
</dbReference>
<dbReference type="PANTHER" id="PTHR24221">
    <property type="entry name" value="ATP-BINDING CASSETTE SUB-FAMILY B"/>
    <property type="match status" value="1"/>
</dbReference>
<dbReference type="PANTHER" id="PTHR24221:SF261">
    <property type="entry name" value="GLUTATHIONE_L-CYSTEINE TRANSPORT SYSTEM ATP-BINDING_PERMEASE PROTEIN CYDD"/>
    <property type="match status" value="1"/>
</dbReference>
<dbReference type="Pfam" id="PF00664">
    <property type="entry name" value="ABC_membrane"/>
    <property type="match status" value="1"/>
</dbReference>
<dbReference type="Pfam" id="PF00005">
    <property type="entry name" value="ABC_tran"/>
    <property type="match status" value="1"/>
</dbReference>
<dbReference type="SMART" id="SM00382">
    <property type="entry name" value="AAA"/>
    <property type="match status" value="1"/>
</dbReference>
<dbReference type="SUPFAM" id="SSF90123">
    <property type="entry name" value="ABC transporter transmembrane region"/>
    <property type="match status" value="1"/>
</dbReference>
<dbReference type="SUPFAM" id="SSF52540">
    <property type="entry name" value="P-loop containing nucleoside triphosphate hydrolases"/>
    <property type="match status" value="1"/>
</dbReference>
<dbReference type="PROSITE" id="PS50929">
    <property type="entry name" value="ABC_TM1F"/>
    <property type="match status" value="1"/>
</dbReference>
<dbReference type="PROSITE" id="PS00211">
    <property type="entry name" value="ABC_TRANSPORTER_1"/>
    <property type="match status" value="1"/>
</dbReference>
<dbReference type="PROSITE" id="PS50893">
    <property type="entry name" value="ABC_TRANSPORTER_2"/>
    <property type="match status" value="1"/>
</dbReference>
<accession>P45082</accession>
<name>CYDD_HAEIN</name>
<proteinExistence type="inferred from homology"/>
<comment type="function">
    <text evidence="1">Part of the ABC transporter complex CydDC that exports the reduced low-molecular-weight thiols cysteine and glutathione to the periplasm. Export of these thiol-containing redox-active molecules may be crucial for redox homeostasis in the periplasm, permitting correct assembly of various respiratory complexes and formation of correct disulfide bonds in periplasmic and secreted proteins. CydD contains transmembrane domains (TMD), which form a pore in the inner membrane, and an ATP-binding domain (NBD), which is responsible for energy generation. Required for the assembly of functional cytochrome bd-type quinol oxidases and periplasmic c-type cytochromes.</text>
</comment>
<comment type="catalytic activity">
    <reaction evidence="1">
        <text>L-cysteine(in) + ATP + H2O = L-cysteine(out) + ADP + phosphate + H(+)</text>
        <dbReference type="Rhea" id="RHEA:29783"/>
        <dbReference type="ChEBI" id="CHEBI:15377"/>
        <dbReference type="ChEBI" id="CHEBI:15378"/>
        <dbReference type="ChEBI" id="CHEBI:30616"/>
        <dbReference type="ChEBI" id="CHEBI:35235"/>
        <dbReference type="ChEBI" id="CHEBI:43474"/>
        <dbReference type="ChEBI" id="CHEBI:456216"/>
    </reaction>
    <physiologicalReaction direction="left-to-right" evidence="1">
        <dbReference type="Rhea" id="RHEA:29784"/>
    </physiologicalReaction>
</comment>
<comment type="catalytic activity">
    <reaction evidence="1">
        <text>glutathione(in) + ATP + H2O = glutathione(out) + ADP + phosphate + H(+)</text>
        <dbReference type="Rhea" id="RHEA:29787"/>
        <dbReference type="ChEBI" id="CHEBI:15377"/>
        <dbReference type="ChEBI" id="CHEBI:15378"/>
        <dbReference type="ChEBI" id="CHEBI:30616"/>
        <dbReference type="ChEBI" id="CHEBI:43474"/>
        <dbReference type="ChEBI" id="CHEBI:57925"/>
        <dbReference type="ChEBI" id="CHEBI:456216"/>
    </reaction>
    <physiologicalReaction direction="left-to-right" evidence="1">
        <dbReference type="Rhea" id="RHEA:29788"/>
    </physiologicalReaction>
</comment>
<comment type="subunit">
    <text evidence="1">Forms a heterodimer with CydC.</text>
</comment>
<comment type="subcellular location">
    <subcellularLocation>
        <location evidence="1">Cell inner membrane</location>
        <topology evidence="2">Multi-pass membrane protein</topology>
    </subcellularLocation>
</comment>
<comment type="domain">
    <text evidence="5">In CydD the ATP-binding domain (NBD) and the transmembrane domain (TMD) are fused.</text>
</comment>
<comment type="similarity">
    <text evidence="5">Belongs to the ABC transporter superfamily. Cysteine exporter (TC 3.A.1.129.1) family.</text>
</comment>